<proteinExistence type="inferred from homology"/>
<keyword id="KW-0472">Membrane</keyword>
<keyword id="KW-1185">Reference proteome</keyword>
<keyword id="KW-0812">Transmembrane</keyword>
<keyword id="KW-1133">Transmembrane helix</keyword>
<dbReference type="EMBL" id="Z48009">
    <property type="protein sequence ID" value="CAA88084.1"/>
    <property type="molecule type" value="Genomic_DNA"/>
</dbReference>
<dbReference type="PIR" id="T18620">
    <property type="entry name" value="T18620"/>
</dbReference>
<dbReference type="RefSeq" id="NP_496044.1">
    <property type="nucleotide sequence ID" value="NM_063643.1"/>
</dbReference>
<dbReference type="SMR" id="Q09204"/>
<dbReference type="FunCoup" id="Q09204">
    <property type="interactions" value="14"/>
</dbReference>
<dbReference type="STRING" id="6239.AH6.6.1"/>
<dbReference type="PaxDb" id="6239-AH6.6"/>
<dbReference type="EnsemblMetazoa" id="AH6.6.1">
    <property type="protein sequence ID" value="AH6.6.1"/>
    <property type="gene ID" value="WBGene00005028"/>
</dbReference>
<dbReference type="GeneID" id="191773"/>
<dbReference type="KEGG" id="cel:CELE_AH6.6"/>
<dbReference type="UCSC" id="AH6.6">
    <property type="organism name" value="c. elegans"/>
</dbReference>
<dbReference type="AGR" id="WB:WBGene00005028"/>
<dbReference type="CTD" id="191773"/>
<dbReference type="WormBase" id="AH6.6">
    <property type="protein sequence ID" value="CE01460"/>
    <property type="gene ID" value="WBGene00005028"/>
    <property type="gene designation" value="sra-2"/>
</dbReference>
<dbReference type="eggNOG" id="ENOG502TFTJ">
    <property type="taxonomic scope" value="Eukaryota"/>
</dbReference>
<dbReference type="GeneTree" id="ENSGT00970000195848"/>
<dbReference type="HOGENOM" id="CLU_048025_0_1_1"/>
<dbReference type="InParanoid" id="Q09204"/>
<dbReference type="OrthoDB" id="5820030at2759"/>
<dbReference type="PhylomeDB" id="Q09204"/>
<dbReference type="PRO" id="PR:Q09204"/>
<dbReference type="Proteomes" id="UP000001940">
    <property type="component" value="Chromosome II"/>
</dbReference>
<dbReference type="GO" id="GO:0016020">
    <property type="term" value="C:membrane"/>
    <property type="evidence" value="ECO:0007669"/>
    <property type="project" value="UniProtKB-SubCell"/>
</dbReference>
<dbReference type="GO" id="GO:0004930">
    <property type="term" value="F:G protein-coupled receptor activity"/>
    <property type="evidence" value="ECO:0007669"/>
    <property type="project" value="InterPro"/>
</dbReference>
<dbReference type="GO" id="GO:0004984">
    <property type="term" value="F:olfactory receptor activity"/>
    <property type="evidence" value="ECO:0000318"/>
    <property type="project" value="GO_Central"/>
</dbReference>
<dbReference type="GO" id="GO:0050907">
    <property type="term" value="P:detection of chemical stimulus involved in sensory perception"/>
    <property type="evidence" value="ECO:0000318"/>
    <property type="project" value="GO_Central"/>
</dbReference>
<dbReference type="InterPro" id="IPR000344">
    <property type="entry name" value="7TM_GPCR_serpentine_rcpt_Sra"/>
</dbReference>
<dbReference type="InterPro" id="IPR051080">
    <property type="entry name" value="Nematode_rcpt-like_serp_alpha"/>
</dbReference>
<dbReference type="PANTHER" id="PTHR31357:SF5">
    <property type="entry name" value="SERPENTINE RECEPTOR CLASS ALPHA-1-RELATED"/>
    <property type="match status" value="1"/>
</dbReference>
<dbReference type="PANTHER" id="PTHR31357">
    <property type="entry name" value="SERPENTINE RECEPTOR CLASS ALPHA-10"/>
    <property type="match status" value="1"/>
</dbReference>
<dbReference type="Pfam" id="PF02117">
    <property type="entry name" value="7TM_GPCR_Sra"/>
    <property type="match status" value="1"/>
</dbReference>
<dbReference type="PRINTS" id="PR00697">
    <property type="entry name" value="TMPROTEINSRA"/>
</dbReference>
<organism>
    <name type="scientific">Caenorhabditis elegans</name>
    <dbReference type="NCBI Taxonomy" id="6239"/>
    <lineage>
        <taxon>Eukaryota</taxon>
        <taxon>Metazoa</taxon>
        <taxon>Ecdysozoa</taxon>
        <taxon>Nematoda</taxon>
        <taxon>Chromadorea</taxon>
        <taxon>Rhabditida</taxon>
        <taxon>Rhabditina</taxon>
        <taxon>Rhabditomorpha</taxon>
        <taxon>Rhabditoidea</taxon>
        <taxon>Rhabditidae</taxon>
        <taxon>Peloderinae</taxon>
        <taxon>Caenorhabditis</taxon>
    </lineage>
</organism>
<protein>
    <recommendedName>
        <fullName>Serpentine receptor class alpha-2</fullName>
        <shortName>Protein sra-2</shortName>
    </recommendedName>
</protein>
<feature type="chain" id="PRO_0000104469" description="Serpentine receptor class alpha-2">
    <location>
        <begin position="1"/>
        <end position="329"/>
    </location>
</feature>
<feature type="transmembrane region" description="Helical" evidence="1">
    <location>
        <begin position="25"/>
        <end position="45"/>
    </location>
</feature>
<feature type="transmembrane region" description="Helical" evidence="1">
    <location>
        <begin position="57"/>
        <end position="77"/>
    </location>
</feature>
<feature type="transmembrane region" description="Helical" evidence="1">
    <location>
        <begin position="104"/>
        <end position="124"/>
    </location>
</feature>
<feature type="transmembrane region" description="Helical" evidence="1">
    <location>
        <begin position="144"/>
        <end position="164"/>
    </location>
</feature>
<feature type="transmembrane region" description="Helical" evidence="1">
    <location>
        <begin position="188"/>
        <end position="208"/>
    </location>
</feature>
<feature type="transmembrane region" description="Helical" evidence="1">
    <location>
        <begin position="240"/>
        <end position="260"/>
    </location>
</feature>
<feature type="transmembrane region" description="Helical" evidence="1">
    <location>
        <begin position="273"/>
        <end position="293"/>
    </location>
</feature>
<sequence>MSNSSCADEDLIIRFDSLNQKAAQFVYLLAIILTFITTYFAVKILFTQSFFEISTKILLVQNLFYANLYQFFHGIEAVRMLYKSFFMINDPCNFMEPEIECVFYYKIILMGSSGMVYGQTGLLIERLCATFSKDYKKKQSAIKCAVISILVLICSSSTGRLIVWDDPIDKYNFACYIPPKESYIRANHYFTMCAVLSTINFCISTFILKYNKRCEYQTRFKVGARFQKQELIESTKAICFLTVSQFVAVFLNSFGMIVLVYIQESISHRIFNLLVVWLYAFPIVVLMFPVILVHQIRSSRWRRALKIKVIKNEKQTQDDHMKHMKNMWI</sequence>
<name>SRA2_CAEEL</name>
<evidence type="ECO:0000255" key="1"/>
<evidence type="ECO:0000305" key="2"/>
<reference key="1">
    <citation type="journal article" date="1998" name="Science">
        <title>Genome sequence of the nematode C. elegans: a platform for investigating biology.</title>
        <authorList>
            <consortium name="The C. elegans sequencing consortium"/>
        </authorList>
    </citation>
    <scope>NUCLEOTIDE SEQUENCE [LARGE SCALE GENOMIC DNA]</scope>
    <source>
        <strain>Bristol N2</strain>
    </source>
</reference>
<comment type="subcellular location">
    <subcellularLocation>
        <location evidence="2">Membrane</location>
        <topology evidence="2">Multi-pass membrane protein</topology>
    </subcellularLocation>
</comment>
<comment type="similarity">
    <text evidence="2">Belongs to the nematode receptor-like protein sra family.</text>
</comment>
<gene>
    <name type="primary">sra-2</name>
    <name type="ORF">AH6.6</name>
</gene>
<accession>Q09204</accession>